<geneLocation type="chloroplast"/>
<dbReference type="EMBL" id="AP009367">
    <property type="protein sequence ID" value="BAF49843.1"/>
    <property type="molecule type" value="Genomic_DNA"/>
</dbReference>
<dbReference type="RefSeq" id="YP_001123019.1">
    <property type="nucleotide sequence ID" value="NC_009266.1"/>
</dbReference>
<dbReference type="SMR" id="A4QJI8"/>
<dbReference type="GeneID" id="4962327"/>
<dbReference type="GO" id="GO:0009507">
    <property type="term" value="C:chloroplast"/>
    <property type="evidence" value="ECO:0007669"/>
    <property type="project" value="UniProtKB-SubCell"/>
</dbReference>
<dbReference type="GO" id="GO:0005763">
    <property type="term" value="C:mitochondrial small ribosomal subunit"/>
    <property type="evidence" value="ECO:0007669"/>
    <property type="project" value="TreeGrafter"/>
</dbReference>
<dbReference type="GO" id="GO:0003735">
    <property type="term" value="F:structural constituent of ribosome"/>
    <property type="evidence" value="ECO:0007669"/>
    <property type="project" value="InterPro"/>
</dbReference>
<dbReference type="GO" id="GO:0006412">
    <property type="term" value="P:translation"/>
    <property type="evidence" value="ECO:0007669"/>
    <property type="project" value="UniProtKB-UniRule"/>
</dbReference>
<dbReference type="CDD" id="cd01425">
    <property type="entry name" value="RPS2"/>
    <property type="match status" value="1"/>
</dbReference>
<dbReference type="FunFam" id="3.40.50.10490:FF:000101">
    <property type="match status" value="1"/>
</dbReference>
<dbReference type="FunFam" id="1.10.287.610:FF:000001">
    <property type="entry name" value="30S ribosomal protein S2"/>
    <property type="match status" value="1"/>
</dbReference>
<dbReference type="Gene3D" id="3.40.50.10490">
    <property type="entry name" value="Glucose-6-phosphate isomerase like protein, domain 1"/>
    <property type="match status" value="1"/>
</dbReference>
<dbReference type="Gene3D" id="1.10.287.610">
    <property type="entry name" value="Helix hairpin bin"/>
    <property type="match status" value="1"/>
</dbReference>
<dbReference type="HAMAP" id="MF_00291_B">
    <property type="entry name" value="Ribosomal_uS2_B"/>
    <property type="match status" value="1"/>
</dbReference>
<dbReference type="InterPro" id="IPR001865">
    <property type="entry name" value="Ribosomal_uS2"/>
</dbReference>
<dbReference type="InterPro" id="IPR005706">
    <property type="entry name" value="Ribosomal_uS2_bac/mit/plastid"/>
</dbReference>
<dbReference type="InterPro" id="IPR018130">
    <property type="entry name" value="Ribosomal_uS2_CS"/>
</dbReference>
<dbReference type="InterPro" id="IPR023591">
    <property type="entry name" value="Ribosomal_uS2_flav_dom_sf"/>
</dbReference>
<dbReference type="NCBIfam" id="TIGR01011">
    <property type="entry name" value="rpsB_bact"/>
    <property type="match status" value="1"/>
</dbReference>
<dbReference type="PANTHER" id="PTHR12534">
    <property type="entry name" value="30S RIBOSOMAL PROTEIN S2 PROKARYOTIC AND ORGANELLAR"/>
    <property type="match status" value="1"/>
</dbReference>
<dbReference type="PANTHER" id="PTHR12534:SF0">
    <property type="entry name" value="SMALL RIBOSOMAL SUBUNIT PROTEIN US2M"/>
    <property type="match status" value="1"/>
</dbReference>
<dbReference type="Pfam" id="PF00318">
    <property type="entry name" value="Ribosomal_S2"/>
    <property type="match status" value="1"/>
</dbReference>
<dbReference type="PRINTS" id="PR00395">
    <property type="entry name" value="RIBOSOMALS2"/>
</dbReference>
<dbReference type="SUPFAM" id="SSF52313">
    <property type="entry name" value="Ribosomal protein S2"/>
    <property type="match status" value="1"/>
</dbReference>
<dbReference type="PROSITE" id="PS00962">
    <property type="entry name" value="RIBOSOMAL_S2_1"/>
    <property type="match status" value="1"/>
</dbReference>
<dbReference type="PROSITE" id="PS00963">
    <property type="entry name" value="RIBOSOMAL_S2_2"/>
    <property type="match status" value="1"/>
</dbReference>
<sequence>MTKRYWNIDLEEMMRAGVHFGHGTRKWNPRMAPYISAKRKGIHIINLTRTARFLSEACDLVFDAASRGKQFLIVGTKNKAADLVSRAAIRARCHYVNKKWLGGMLTNWSTTEKRLHKFRDLRTEQKTEGLNRLPKRDAAVLKRQFSHLETYLGGIKYMTGLPDIVIIIDQQEEYTALRECITLGIPTISLIDTNCNPDLADISIPANDDAIASIRFILNKLVFAICEGRSSYIQNS</sequence>
<evidence type="ECO:0000305" key="1"/>
<keyword id="KW-0150">Chloroplast</keyword>
<keyword id="KW-0934">Plastid</keyword>
<keyword id="KW-0687">Ribonucleoprotein</keyword>
<keyword id="KW-0689">Ribosomal protein</keyword>
<comment type="subcellular location">
    <subcellularLocation>
        <location>Plastid</location>
        <location>Chloroplast</location>
    </subcellularLocation>
</comment>
<comment type="similarity">
    <text evidence="1">Belongs to the universal ribosomal protein uS2 family.</text>
</comment>
<proteinExistence type="inferred from homology"/>
<protein>
    <recommendedName>
        <fullName evidence="1">Small ribosomal subunit protein uS2c</fullName>
    </recommendedName>
    <alternativeName>
        <fullName>30S ribosomal protein S2, chloroplastic</fullName>
    </alternativeName>
</protein>
<reference key="1">
    <citation type="submission" date="2007-03" db="EMBL/GenBank/DDBJ databases">
        <title>Sequencing analysis of Aethionema grandiflorum chloroplast DNA.</title>
        <authorList>
            <person name="Hosouchi T."/>
            <person name="Tsuruoka H."/>
            <person name="Kotani H."/>
        </authorList>
    </citation>
    <scope>NUCLEOTIDE SEQUENCE [LARGE SCALE GENOMIC DNA]</scope>
</reference>
<gene>
    <name type="primary">rps2</name>
</gene>
<name>RR2_AETGR</name>
<organism>
    <name type="scientific">Aethionema grandiflorum</name>
    <name type="common">Persian stone-cress</name>
    <dbReference type="NCBI Taxonomy" id="72657"/>
    <lineage>
        <taxon>Eukaryota</taxon>
        <taxon>Viridiplantae</taxon>
        <taxon>Streptophyta</taxon>
        <taxon>Embryophyta</taxon>
        <taxon>Tracheophyta</taxon>
        <taxon>Spermatophyta</taxon>
        <taxon>Magnoliopsida</taxon>
        <taxon>eudicotyledons</taxon>
        <taxon>Gunneridae</taxon>
        <taxon>Pentapetalae</taxon>
        <taxon>rosids</taxon>
        <taxon>malvids</taxon>
        <taxon>Brassicales</taxon>
        <taxon>Brassicaceae</taxon>
        <taxon>Aethionemeae</taxon>
        <taxon>Aethionema</taxon>
    </lineage>
</organism>
<feature type="chain" id="PRO_0000352087" description="Small ribosomal subunit protein uS2c">
    <location>
        <begin position="1"/>
        <end position="236"/>
    </location>
</feature>
<accession>A4QJI8</accession>